<protein>
    <recommendedName>
        <fullName evidence="1">Co-chaperone protein HscB homolog</fullName>
    </recommendedName>
</protein>
<gene>
    <name evidence="1" type="primary">hscB</name>
    <name type="ordered locus">BAV1511</name>
</gene>
<organism>
    <name type="scientific">Bordetella avium (strain 197N)</name>
    <dbReference type="NCBI Taxonomy" id="360910"/>
    <lineage>
        <taxon>Bacteria</taxon>
        <taxon>Pseudomonadati</taxon>
        <taxon>Pseudomonadota</taxon>
        <taxon>Betaproteobacteria</taxon>
        <taxon>Burkholderiales</taxon>
        <taxon>Alcaligenaceae</taxon>
        <taxon>Bordetella</taxon>
    </lineage>
</organism>
<accession>Q2L236</accession>
<comment type="function">
    <text evidence="1">Co-chaperone involved in the maturation of iron-sulfur cluster-containing proteins. Seems to help targeting proteins to be folded toward HscA.</text>
</comment>
<comment type="subunit">
    <text evidence="1">Interacts with HscA and stimulates its ATPase activity.</text>
</comment>
<comment type="similarity">
    <text evidence="1">Belongs to the HscB family.</text>
</comment>
<proteinExistence type="inferred from homology"/>
<name>HSCB_BORA1</name>
<dbReference type="EMBL" id="AM167904">
    <property type="protein sequence ID" value="CAJ49124.1"/>
    <property type="molecule type" value="Genomic_DNA"/>
</dbReference>
<dbReference type="RefSeq" id="WP_012417188.1">
    <property type="nucleotide sequence ID" value="NC_010645.1"/>
</dbReference>
<dbReference type="SMR" id="Q2L236"/>
<dbReference type="STRING" id="360910.BAV1511"/>
<dbReference type="KEGG" id="bav:BAV1511"/>
<dbReference type="eggNOG" id="COG1076">
    <property type="taxonomic scope" value="Bacteria"/>
</dbReference>
<dbReference type="HOGENOM" id="CLU_068529_2_1_4"/>
<dbReference type="OrthoDB" id="287587at2"/>
<dbReference type="Proteomes" id="UP000001977">
    <property type="component" value="Chromosome"/>
</dbReference>
<dbReference type="GO" id="GO:1990230">
    <property type="term" value="C:iron-sulfur cluster transfer complex"/>
    <property type="evidence" value="ECO:0007669"/>
    <property type="project" value="TreeGrafter"/>
</dbReference>
<dbReference type="GO" id="GO:0001671">
    <property type="term" value="F:ATPase activator activity"/>
    <property type="evidence" value="ECO:0007669"/>
    <property type="project" value="InterPro"/>
</dbReference>
<dbReference type="GO" id="GO:0051087">
    <property type="term" value="F:protein-folding chaperone binding"/>
    <property type="evidence" value="ECO:0007669"/>
    <property type="project" value="InterPro"/>
</dbReference>
<dbReference type="GO" id="GO:0044571">
    <property type="term" value="P:[2Fe-2S] cluster assembly"/>
    <property type="evidence" value="ECO:0007669"/>
    <property type="project" value="InterPro"/>
</dbReference>
<dbReference type="GO" id="GO:0051259">
    <property type="term" value="P:protein complex oligomerization"/>
    <property type="evidence" value="ECO:0007669"/>
    <property type="project" value="InterPro"/>
</dbReference>
<dbReference type="GO" id="GO:0006457">
    <property type="term" value="P:protein folding"/>
    <property type="evidence" value="ECO:0007669"/>
    <property type="project" value="UniProtKB-UniRule"/>
</dbReference>
<dbReference type="CDD" id="cd06257">
    <property type="entry name" value="DnaJ"/>
    <property type="match status" value="1"/>
</dbReference>
<dbReference type="Gene3D" id="1.10.287.110">
    <property type="entry name" value="DnaJ domain"/>
    <property type="match status" value="1"/>
</dbReference>
<dbReference type="Gene3D" id="1.20.1280.20">
    <property type="entry name" value="HscB, C-terminal domain"/>
    <property type="match status" value="1"/>
</dbReference>
<dbReference type="HAMAP" id="MF_00682">
    <property type="entry name" value="HscB"/>
    <property type="match status" value="1"/>
</dbReference>
<dbReference type="InterPro" id="IPR001623">
    <property type="entry name" value="DnaJ_domain"/>
</dbReference>
<dbReference type="InterPro" id="IPR004640">
    <property type="entry name" value="HscB"/>
</dbReference>
<dbReference type="InterPro" id="IPR036386">
    <property type="entry name" value="HscB_C_sf"/>
</dbReference>
<dbReference type="InterPro" id="IPR009073">
    <property type="entry name" value="HscB_oligo_C"/>
</dbReference>
<dbReference type="InterPro" id="IPR036869">
    <property type="entry name" value="J_dom_sf"/>
</dbReference>
<dbReference type="NCBIfam" id="TIGR00714">
    <property type="entry name" value="hscB"/>
    <property type="match status" value="1"/>
</dbReference>
<dbReference type="NCBIfam" id="NF002935">
    <property type="entry name" value="PRK03578.1"/>
    <property type="match status" value="1"/>
</dbReference>
<dbReference type="PANTHER" id="PTHR14021">
    <property type="entry name" value="IRON-SULFUR CLUSTER CO-CHAPERONE PROTEIN HSCB"/>
    <property type="match status" value="1"/>
</dbReference>
<dbReference type="PANTHER" id="PTHR14021:SF15">
    <property type="entry name" value="IRON-SULFUR CLUSTER CO-CHAPERONE PROTEIN HSCB"/>
    <property type="match status" value="1"/>
</dbReference>
<dbReference type="Pfam" id="PF07743">
    <property type="entry name" value="HSCB_C"/>
    <property type="match status" value="1"/>
</dbReference>
<dbReference type="SMART" id="SM00271">
    <property type="entry name" value="DnaJ"/>
    <property type="match status" value="1"/>
</dbReference>
<dbReference type="SUPFAM" id="SSF46565">
    <property type="entry name" value="Chaperone J-domain"/>
    <property type="match status" value="1"/>
</dbReference>
<dbReference type="SUPFAM" id="SSF47144">
    <property type="entry name" value="HSC20 (HSCB), C-terminal oligomerisation domain"/>
    <property type="match status" value="1"/>
</dbReference>
<dbReference type="PROSITE" id="PS50076">
    <property type="entry name" value="DNAJ_2"/>
    <property type="match status" value="1"/>
</dbReference>
<evidence type="ECO:0000255" key="1">
    <source>
        <dbReference type="HAMAP-Rule" id="MF_00682"/>
    </source>
</evidence>
<keyword id="KW-0143">Chaperone</keyword>
<keyword id="KW-1185">Reference proteome</keyword>
<feature type="chain" id="PRO_1000082996" description="Co-chaperone protein HscB homolog">
    <location>
        <begin position="1"/>
        <end position="168"/>
    </location>
</feature>
<feature type="domain" description="J" evidence="1">
    <location>
        <begin position="5"/>
        <end position="77"/>
    </location>
</feature>
<reference key="1">
    <citation type="journal article" date="2006" name="J. Bacteriol.">
        <title>Comparison of the genome sequence of the poultry pathogen Bordetella avium with those of B. bronchiseptica, B. pertussis, and B. parapertussis reveals extensive diversity in surface structures associated with host interaction.</title>
        <authorList>
            <person name="Sebaihia M."/>
            <person name="Preston A."/>
            <person name="Maskell D.J."/>
            <person name="Kuzmiak H."/>
            <person name="Connell T.D."/>
            <person name="King N.D."/>
            <person name="Orndorff P.E."/>
            <person name="Miyamoto D.M."/>
            <person name="Thomson N.R."/>
            <person name="Harris D."/>
            <person name="Goble A."/>
            <person name="Lord A."/>
            <person name="Murphy L."/>
            <person name="Quail M.A."/>
            <person name="Rutter S."/>
            <person name="Squares R."/>
            <person name="Squares S."/>
            <person name="Woodward J."/>
            <person name="Parkhill J."/>
            <person name="Temple L.M."/>
        </authorList>
    </citation>
    <scope>NUCLEOTIDE SEQUENCE [LARGE SCALE GENOMIC DNA]</scope>
    <source>
        <strain>197N</strain>
    </source>
</reference>
<sequence length="168" mass="19111">MAADDYFSLFGLPSKFAIDAQALEEAWRLVAARVHPDRYATASAAERRVAMQWAARANEAYRLLRDPMLRARYLCESAGIDLQTESNTAMAPAFLMQQMEWREMLDDARHDERARAALGEELEQAREAMRASLAELIDTRQDYAAAGQKVREWMFIEKLAQELAAVQP</sequence>